<evidence type="ECO:0000255" key="1">
    <source>
        <dbReference type="HAMAP-Rule" id="MF_00148"/>
    </source>
</evidence>
<protein>
    <recommendedName>
        <fullName evidence="1">Uracil-DNA glycosylase</fullName>
        <shortName evidence="1">UDG</shortName>
        <ecNumber evidence="1">3.2.2.27</ecNumber>
    </recommendedName>
</protein>
<sequence length="237" mass="26921">MQLTEQQQDKLSKVQLEESWKRSLTSFLLSPYMDSLRDFLFQQKQAQKTIYPPSKQIFNALNITPLDHVKVVILGQDPYHGPNQANGLSFSVQRGVALPPSLRNIFHELHTDLGVPVSRHGDLTKWAEQGVLLLNSVLTVEAGQPTSHHKQGWEEFTDAVIDVLNEQREHIVFILWGAYAQRKGQRINREKHLVLTAAHPSPLAANRGGFFGCKVFSKTNQYLKQHGIEPIDWQLDA</sequence>
<dbReference type="EC" id="3.2.2.27" evidence="1"/>
<dbReference type="EMBL" id="CU468230">
    <property type="protein sequence ID" value="CAP01073.1"/>
    <property type="molecule type" value="Genomic_DNA"/>
</dbReference>
<dbReference type="SMR" id="B0VMZ7"/>
<dbReference type="KEGG" id="abm:ABSDF1734"/>
<dbReference type="HOGENOM" id="CLU_032162_3_0_6"/>
<dbReference type="Proteomes" id="UP000001741">
    <property type="component" value="Chromosome"/>
</dbReference>
<dbReference type="GO" id="GO:0005737">
    <property type="term" value="C:cytoplasm"/>
    <property type="evidence" value="ECO:0007669"/>
    <property type="project" value="UniProtKB-SubCell"/>
</dbReference>
<dbReference type="GO" id="GO:0004844">
    <property type="term" value="F:uracil DNA N-glycosylase activity"/>
    <property type="evidence" value="ECO:0007669"/>
    <property type="project" value="UniProtKB-UniRule"/>
</dbReference>
<dbReference type="GO" id="GO:0097510">
    <property type="term" value="P:base-excision repair, AP site formation via deaminated base removal"/>
    <property type="evidence" value="ECO:0007669"/>
    <property type="project" value="TreeGrafter"/>
</dbReference>
<dbReference type="CDD" id="cd10027">
    <property type="entry name" value="UDG-F1-like"/>
    <property type="match status" value="1"/>
</dbReference>
<dbReference type="FunFam" id="3.40.470.10:FF:000001">
    <property type="entry name" value="Uracil-DNA glycosylase"/>
    <property type="match status" value="1"/>
</dbReference>
<dbReference type="Gene3D" id="3.40.470.10">
    <property type="entry name" value="Uracil-DNA glycosylase-like domain"/>
    <property type="match status" value="1"/>
</dbReference>
<dbReference type="HAMAP" id="MF_00148">
    <property type="entry name" value="UDG"/>
    <property type="match status" value="1"/>
</dbReference>
<dbReference type="InterPro" id="IPR002043">
    <property type="entry name" value="UDG_fam1"/>
</dbReference>
<dbReference type="InterPro" id="IPR018085">
    <property type="entry name" value="Ura-DNA_Glyclase_AS"/>
</dbReference>
<dbReference type="InterPro" id="IPR005122">
    <property type="entry name" value="Uracil-DNA_glycosylase-like"/>
</dbReference>
<dbReference type="InterPro" id="IPR036895">
    <property type="entry name" value="Uracil-DNA_glycosylase-like_sf"/>
</dbReference>
<dbReference type="NCBIfam" id="NF003588">
    <property type="entry name" value="PRK05254.1-1"/>
    <property type="match status" value="1"/>
</dbReference>
<dbReference type="NCBIfam" id="NF003589">
    <property type="entry name" value="PRK05254.1-2"/>
    <property type="match status" value="1"/>
</dbReference>
<dbReference type="NCBIfam" id="NF003591">
    <property type="entry name" value="PRK05254.1-4"/>
    <property type="match status" value="1"/>
</dbReference>
<dbReference type="NCBIfam" id="NF003592">
    <property type="entry name" value="PRK05254.1-5"/>
    <property type="match status" value="1"/>
</dbReference>
<dbReference type="NCBIfam" id="TIGR00628">
    <property type="entry name" value="ung"/>
    <property type="match status" value="1"/>
</dbReference>
<dbReference type="PANTHER" id="PTHR11264">
    <property type="entry name" value="URACIL-DNA GLYCOSYLASE"/>
    <property type="match status" value="1"/>
</dbReference>
<dbReference type="PANTHER" id="PTHR11264:SF0">
    <property type="entry name" value="URACIL-DNA GLYCOSYLASE"/>
    <property type="match status" value="1"/>
</dbReference>
<dbReference type="Pfam" id="PF03167">
    <property type="entry name" value="UDG"/>
    <property type="match status" value="1"/>
</dbReference>
<dbReference type="SMART" id="SM00986">
    <property type="entry name" value="UDG"/>
    <property type="match status" value="1"/>
</dbReference>
<dbReference type="SMART" id="SM00987">
    <property type="entry name" value="UreE_C"/>
    <property type="match status" value="1"/>
</dbReference>
<dbReference type="SUPFAM" id="SSF52141">
    <property type="entry name" value="Uracil-DNA glycosylase-like"/>
    <property type="match status" value="1"/>
</dbReference>
<dbReference type="PROSITE" id="PS00130">
    <property type="entry name" value="U_DNA_GLYCOSYLASE"/>
    <property type="match status" value="1"/>
</dbReference>
<keyword id="KW-0963">Cytoplasm</keyword>
<keyword id="KW-0227">DNA damage</keyword>
<keyword id="KW-0234">DNA repair</keyword>
<keyword id="KW-0378">Hydrolase</keyword>
<name>UNG_ACIBS</name>
<accession>B0VMZ7</accession>
<proteinExistence type="inferred from homology"/>
<organism>
    <name type="scientific">Acinetobacter baumannii (strain SDF)</name>
    <dbReference type="NCBI Taxonomy" id="509170"/>
    <lineage>
        <taxon>Bacteria</taxon>
        <taxon>Pseudomonadati</taxon>
        <taxon>Pseudomonadota</taxon>
        <taxon>Gammaproteobacteria</taxon>
        <taxon>Moraxellales</taxon>
        <taxon>Moraxellaceae</taxon>
        <taxon>Acinetobacter</taxon>
        <taxon>Acinetobacter calcoaceticus/baumannii complex</taxon>
    </lineage>
</organism>
<feature type="chain" id="PRO_1000096557" description="Uracil-DNA glycosylase">
    <location>
        <begin position="1"/>
        <end position="237"/>
    </location>
</feature>
<feature type="active site" description="Proton acceptor" evidence="1">
    <location>
        <position position="77"/>
    </location>
</feature>
<gene>
    <name evidence="1" type="primary">ung</name>
    <name type="ordered locus">ABSDF1734</name>
</gene>
<comment type="function">
    <text evidence="1">Excises uracil residues from the DNA which can arise as a result of misincorporation of dUMP residues by DNA polymerase or due to deamination of cytosine.</text>
</comment>
<comment type="catalytic activity">
    <reaction evidence="1">
        <text>Hydrolyzes single-stranded DNA or mismatched double-stranded DNA and polynucleotides, releasing free uracil.</text>
        <dbReference type="EC" id="3.2.2.27"/>
    </reaction>
</comment>
<comment type="subcellular location">
    <subcellularLocation>
        <location evidence="1">Cytoplasm</location>
    </subcellularLocation>
</comment>
<comment type="similarity">
    <text evidence="1">Belongs to the uracil-DNA glycosylase (UDG) superfamily. UNG family.</text>
</comment>
<reference key="1">
    <citation type="journal article" date="2008" name="PLoS ONE">
        <title>Comparative analysis of Acinetobacters: three genomes for three lifestyles.</title>
        <authorList>
            <person name="Vallenet D."/>
            <person name="Nordmann P."/>
            <person name="Barbe V."/>
            <person name="Poirel L."/>
            <person name="Mangenot S."/>
            <person name="Bataille E."/>
            <person name="Dossat C."/>
            <person name="Gas S."/>
            <person name="Kreimeyer A."/>
            <person name="Lenoble P."/>
            <person name="Oztas S."/>
            <person name="Poulain J."/>
            <person name="Segurens B."/>
            <person name="Robert C."/>
            <person name="Abergel C."/>
            <person name="Claverie J.-M."/>
            <person name="Raoult D."/>
            <person name="Medigue C."/>
            <person name="Weissenbach J."/>
            <person name="Cruveiller S."/>
        </authorList>
    </citation>
    <scope>NUCLEOTIDE SEQUENCE [LARGE SCALE GENOMIC DNA]</scope>
    <source>
        <strain>SDF</strain>
    </source>
</reference>